<keyword id="KW-0007">Acetylation</keyword>
<keyword id="KW-1185">Reference proteome</keyword>
<keyword id="KW-0687">Ribonucleoprotein</keyword>
<keyword id="KW-0689">Ribosomal protein</keyword>
<keyword id="KW-0694">RNA-binding</keyword>
<keyword id="KW-0699">rRNA-binding</keyword>
<reference key="1">
    <citation type="journal article" date="2002" name="Nucleic Acids Res.">
        <title>Genome sequence of Shigella flexneri 2a: insights into pathogenicity through comparison with genomes of Escherichia coli K12 and O157.</title>
        <authorList>
            <person name="Jin Q."/>
            <person name="Yuan Z."/>
            <person name="Xu J."/>
            <person name="Wang Y."/>
            <person name="Shen Y."/>
            <person name="Lu W."/>
            <person name="Wang J."/>
            <person name="Liu H."/>
            <person name="Yang J."/>
            <person name="Yang F."/>
            <person name="Zhang X."/>
            <person name="Zhang J."/>
            <person name="Yang G."/>
            <person name="Wu H."/>
            <person name="Qu D."/>
            <person name="Dong J."/>
            <person name="Sun L."/>
            <person name="Xue Y."/>
            <person name="Zhao A."/>
            <person name="Gao Y."/>
            <person name="Zhu J."/>
            <person name="Kan B."/>
            <person name="Ding K."/>
            <person name="Chen S."/>
            <person name="Cheng H."/>
            <person name="Yao Z."/>
            <person name="He B."/>
            <person name="Chen R."/>
            <person name="Ma D."/>
            <person name="Qiang B."/>
            <person name="Wen Y."/>
            <person name="Hou Y."/>
            <person name="Yu J."/>
        </authorList>
    </citation>
    <scope>NUCLEOTIDE SEQUENCE [LARGE SCALE GENOMIC DNA]</scope>
    <source>
        <strain>301 / Serotype 2a</strain>
    </source>
</reference>
<reference key="2">
    <citation type="journal article" date="2003" name="Infect. Immun.">
        <title>Complete genome sequence and comparative genomics of Shigella flexneri serotype 2a strain 2457T.</title>
        <authorList>
            <person name="Wei J."/>
            <person name="Goldberg M.B."/>
            <person name="Burland V."/>
            <person name="Venkatesan M.M."/>
            <person name="Deng W."/>
            <person name="Fournier G."/>
            <person name="Mayhew G.F."/>
            <person name="Plunkett G. III"/>
            <person name="Rose D.J."/>
            <person name="Darling A."/>
            <person name="Mau B."/>
            <person name="Perna N.T."/>
            <person name="Payne S.M."/>
            <person name="Runyen-Janecky L.J."/>
            <person name="Zhou S."/>
            <person name="Schwartz D.C."/>
            <person name="Blattner F.R."/>
        </authorList>
    </citation>
    <scope>NUCLEOTIDE SEQUENCE [LARGE SCALE GENOMIC DNA]</scope>
    <source>
        <strain>ATCC 700930 / 2457T / Serotype 2a</strain>
    </source>
</reference>
<evidence type="ECO:0000255" key="1">
    <source>
        <dbReference type="HAMAP-Rule" id="MF_00360"/>
    </source>
</evidence>
<evidence type="ECO:0000256" key="2">
    <source>
        <dbReference type="SAM" id="MobiDB-lite"/>
    </source>
</evidence>
<evidence type="ECO:0000305" key="3"/>
<dbReference type="EMBL" id="AE005674">
    <property type="protein sequence ID" value="AAN45771.1"/>
    <property type="molecule type" value="Genomic_DNA"/>
</dbReference>
<dbReference type="EMBL" id="AE014073">
    <property type="protein sequence ID" value="AAP19554.1"/>
    <property type="molecule type" value="Genomic_DNA"/>
</dbReference>
<dbReference type="RefSeq" id="NP_710064.1">
    <property type="nucleotide sequence ID" value="NC_004337.2"/>
</dbReference>
<dbReference type="RefSeq" id="WP_001216676.1">
    <property type="nucleotide sequence ID" value="NZ_WPGW01000113.1"/>
</dbReference>
<dbReference type="SMR" id="P0A4D2"/>
<dbReference type="STRING" id="198214.SF4354"/>
<dbReference type="PaxDb" id="198214-SF4354"/>
<dbReference type="GeneID" id="1027388"/>
<dbReference type="GeneID" id="93777623"/>
<dbReference type="KEGG" id="sfl:SF4354"/>
<dbReference type="KEGG" id="sfx:S4625"/>
<dbReference type="PATRIC" id="fig|198214.7.peg.5134"/>
<dbReference type="HOGENOM" id="CLU_113441_6_1_6"/>
<dbReference type="Proteomes" id="UP000001006">
    <property type="component" value="Chromosome"/>
</dbReference>
<dbReference type="Proteomes" id="UP000002673">
    <property type="component" value="Chromosome"/>
</dbReference>
<dbReference type="GO" id="GO:0022627">
    <property type="term" value="C:cytosolic small ribosomal subunit"/>
    <property type="evidence" value="ECO:0007669"/>
    <property type="project" value="TreeGrafter"/>
</dbReference>
<dbReference type="GO" id="GO:0070181">
    <property type="term" value="F:small ribosomal subunit rRNA binding"/>
    <property type="evidence" value="ECO:0007669"/>
    <property type="project" value="TreeGrafter"/>
</dbReference>
<dbReference type="GO" id="GO:0003735">
    <property type="term" value="F:structural constituent of ribosome"/>
    <property type="evidence" value="ECO:0007669"/>
    <property type="project" value="InterPro"/>
</dbReference>
<dbReference type="GO" id="GO:0006412">
    <property type="term" value="P:translation"/>
    <property type="evidence" value="ECO:0007669"/>
    <property type="project" value="UniProtKB-UniRule"/>
</dbReference>
<dbReference type="CDD" id="cd00473">
    <property type="entry name" value="bS6"/>
    <property type="match status" value="1"/>
</dbReference>
<dbReference type="FunFam" id="3.30.70.60:FF:000003">
    <property type="entry name" value="30S ribosomal protein S6"/>
    <property type="match status" value="1"/>
</dbReference>
<dbReference type="Gene3D" id="3.30.70.60">
    <property type="match status" value="1"/>
</dbReference>
<dbReference type="HAMAP" id="MF_00360">
    <property type="entry name" value="Ribosomal_bS6"/>
    <property type="match status" value="1"/>
</dbReference>
<dbReference type="InterPro" id="IPR000529">
    <property type="entry name" value="Ribosomal_bS6"/>
</dbReference>
<dbReference type="InterPro" id="IPR020815">
    <property type="entry name" value="Ribosomal_bS6_CS"/>
</dbReference>
<dbReference type="InterPro" id="IPR035980">
    <property type="entry name" value="Ribosomal_bS6_sf"/>
</dbReference>
<dbReference type="InterPro" id="IPR020814">
    <property type="entry name" value="Ribosomal_S6_plastid/chlpt"/>
</dbReference>
<dbReference type="InterPro" id="IPR014717">
    <property type="entry name" value="Transl_elong_EF1B/ribsomal_bS6"/>
</dbReference>
<dbReference type="NCBIfam" id="TIGR00166">
    <property type="entry name" value="S6"/>
    <property type="match status" value="1"/>
</dbReference>
<dbReference type="PANTHER" id="PTHR21011">
    <property type="entry name" value="MITOCHONDRIAL 28S RIBOSOMAL PROTEIN S6"/>
    <property type="match status" value="1"/>
</dbReference>
<dbReference type="PANTHER" id="PTHR21011:SF1">
    <property type="entry name" value="SMALL RIBOSOMAL SUBUNIT PROTEIN BS6M"/>
    <property type="match status" value="1"/>
</dbReference>
<dbReference type="Pfam" id="PF01250">
    <property type="entry name" value="Ribosomal_S6"/>
    <property type="match status" value="1"/>
</dbReference>
<dbReference type="SUPFAM" id="SSF54995">
    <property type="entry name" value="Ribosomal protein S6"/>
    <property type="match status" value="1"/>
</dbReference>
<dbReference type="PROSITE" id="PS01048">
    <property type="entry name" value="RIBOSOMAL_S6"/>
    <property type="match status" value="1"/>
</dbReference>
<sequence length="131" mass="15187">MRHYEIVFMVHPDQSEQVPGMIERYTAAITGAEGKIHRLEDWGRRQLAYPINKLHKAHYVLMNVEAPQEVIDELETTFRFNDAVIRSMVMRTKHAVTEASPMVKAKDERRERRDDFANETADDAEAGDSEE</sequence>
<proteinExistence type="inferred from homology"/>
<accession>P0A4D2</accession>
<accession>Q8XDI1</accession>
<feature type="chain" id="PRO_0000176834" description="Small ribosomal subunit protein bS6">
    <location>
        <begin position="1"/>
        <end position="131"/>
    </location>
</feature>
<feature type="region of interest" description="Disordered" evidence="2">
    <location>
        <begin position="98"/>
        <end position="131"/>
    </location>
</feature>
<feature type="compositionally biased region" description="Basic and acidic residues" evidence="2">
    <location>
        <begin position="104"/>
        <end position="116"/>
    </location>
</feature>
<feature type="compositionally biased region" description="Acidic residues" evidence="2">
    <location>
        <begin position="120"/>
        <end position="131"/>
    </location>
</feature>
<feature type="modified residue" description="N6-acetyllysine" evidence="1">
    <location>
        <position position="93"/>
    </location>
</feature>
<protein>
    <recommendedName>
        <fullName evidence="1">Small ribosomal subunit protein bS6</fullName>
    </recommendedName>
    <alternativeName>
        <fullName evidence="3">30S ribosomal protein S6</fullName>
    </alternativeName>
</protein>
<organism>
    <name type="scientific">Shigella flexneri</name>
    <dbReference type="NCBI Taxonomy" id="623"/>
    <lineage>
        <taxon>Bacteria</taxon>
        <taxon>Pseudomonadati</taxon>
        <taxon>Pseudomonadota</taxon>
        <taxon>Gammaproteobacteria</taxon>
        <taxon>Enterobacterales</taxon>
        <taxon>Enterobacteriaceae</taxon>
        <taxon>Shigella</taxon>
    </lineage>
</organism>
<gene>
    <name evidence="1" type="primary">rpsF</name>
    <name type="ordered locus">SF4354</name>
    <name type="ordered locus">S4625</name>
</gene>
<comment type="function">
    <text evidence="1">Binds together with bS18 to 16S ribosomal RNA.</text>
</comment>
<comment type="similarity">
    <text evidence="1">Belongs to the bacterial ribosomal protein bS6 family.</text>
</comment>
<name>RS6_SHIFL</name>